<dbReference type="EC" id="3.4.13.9" evidence="1"/>
<dbReference type="EMBL" id="CP000821">
    <property type="protein sequence ID" value="ABV34637.1"/>
    <property type="molecule type" value="Genomic_DNA"/>
</dbReference>
<dbReference type="RefSeq" id="WP_012004163.1">
    <property type="nucleotide sequence ID" value="NC_009831.1"/>
</dbReference>
<dbReference type="SMR" id="A8FP64"/>
<dbReference type="STRING" id="425104.Ssed_0024"/>
<dbReference type="MEROPS" id="M24.003"/>
<dbReference type="KEGG" id="sse:Ssed_0024"/>
<dbReference type="eggNOG" id="COG0006">
    <property type="taxonomic scope" value="Bacteria"/>
</dbReference>
<dbReference type="HOGENOM" id="CLU_050675_0_0_6"/>
<dbReference type="OrthoDB" id="9806388at2"/>
<dbReference type="Proteomes" id="UP000002015">
    <property type="component" value="Chromosome"/>
</dbReference>
<dbReference type="GO" id="GO:0005829">
    <property type="term" value="C:cytosol"/>
    <property type="evidence" value="ECO:0007669"/>
    <property type="project" value="TreeGrafter"/>
</dbReference>
<dbReference type="GO" id="GO:0004177">
    <property type="term" value="F:aminopeptidase activity"/>
    <property type="evidence" value="ECO:0007669"/>
    <property type="project" value="TreeGrafter"/>
</dbReference>
<dbReference type="GO" id="GO:0046872">
    <property type="term" value="F:metal ion binding"/>
    <property type="evidence" value="ECO:0007669"/>
    <property type="project" value="UniProtKB-KW"/>
</dbReference>
<dbReference type="GO" id="GO:0008235">
    <property type="term" value="F:metalloexopeptidase activity"/>
    <property type="evidence" value="ECO:0007669"/>
    <property type="project" value="UniProtKB-UniRule"/>
</dbReference>
<dbReference type="GO" id="GO:0016795">
    <property type="term" value="F:phosphoric triester hydrolase activity"/>
    <property type="evidence" value="ECO:0007669"/>
    <property type="project" value="InterPro"/>
</dbReference>
<dbReference type="GO" id="GO:0102009">
    <property type="term" value="F:proline dipeptidase activity"/>
    <property type="evidence" value="ECO:0007669"/>
    <property type="project" value="UniProtKB-EC"/>
</dbReference>
<dbReference type="GO" id="GO:0006508">
    <property type="term" value="P:proteolysis"/>
    <property type="evidence" value="ECO:0007669"/>
    <property type="project" value="UniProtKB-KW"/>
</dbReference>
<dbReference type="CDD" id="cd01087">
    <property type="entry name" value="Prolidase"/>
    <property type="match status" value="1"/>
</dbReference>
<dbReference type="Gene3D" id="3.90.230.10">
    <property type="entry name" value="Creatinase/methionine aminopeptidase superfamily"/>
    <property type="match status" value="1"/>
</dbReference>
<dbReference type="Gene3D" id="3.40.350.10">
    <property type="entry name" value="Creatinase/prolidase N-terminal domain"/>
    <property type="match status" value="1"/>
</dbReference>
<dbReference type="HAMAP" id="MF_01279">
    <property type="entry name" value="X_Pro_dipeptid"/>
    <property type="match status" value="1"/>
</dbReference>
<dbReference type="InterPro" id="IPR029149">
    <property type="entry name" value="Creatin/AminoP/Spt16_N"/>
</dbReference>
<dbReference type="InterPro" id="IPR036005">
    <property type="entry name" value="Creatinase/aminopeptidase-like"/>
</dbReference>
<dbReference type="InterPro" id="IPR048819">
    <property type="entry name" value="PepQ_N"/>
</dbReference>
<dbReference type="InterPro" id="IPR000994">
    <property type="entry name" value="Pept_M24"/>
</dbReference>
<dbReference type="InterPro" id="IPR001131">
    <property type="entry name" value="Peptidase_M24B_aminopep-P_CS"/>
</dbReference>
<dbReference type="InterPro" id="IPR052433">
    <property type="entry name" value="X-Pro_dipept-like"/>
</dbReference>
<dbReference type="InterPro" id="IPR022846">
    <property type="entry name" value="X_Pro_dipept"/>
</dbReference>
<dbReference type="NCBIfam" id="NF010133">
    <property type="entry name" value="PRK13607.1"/>
    <property type="match status" value="1"/>
</dbReference>
<dbReference type="PANTHER" id="PTHR43226">
    <property type="entry name" value="XAA-PRO AMINOPEPTIDASE 3"/>
    <property type="match status" value="1"/>
</dbReference>
<dbReference type="PANTHER" id="PTHR43226:SF8">
    <property type="entry name" value="XAA-PRO DIPEPTIDASE"/>
    <property type="match status" value="1"/>
</dbReference>
<dbReference type="Pfam" id="PF21216">
    <property type="entry name" value="PepQ_N"/>
    <property type="match status" value="1"/>
</dbReference>
<dbReference type="Pfam" id="PF00557">
    <property type="entry name" value="Peptidase_M24"/>
    <property type="match status" value="1"/>
</dbReference>
<dbReference type="SUPFAM" id="SSF55920">
    <property type="entry name" value="Creatinase/aminopeptidase"/>
    <property type="match status" value="1"/>
</dbReference>
<dbReference type="PROSITE" id="PS00491">
    <property type="entry name" value="PROLINE_PEPTIDASE"/>
    <property type="match status" value="1"/>
</dbReference>
<comment type="function">
    <text evidence="1">Splits dipeptides with a prolyl residue in the C-terminal position.</text>
</comment>
<comment type="catalytic activity">
    <reaction evidence="1">
        <text>Xaa-L-Pro dipeptide + H2O = an L-alpha-amino acid + L-proline</text>
        <dbReference type="Rhea" id="RHEA:76407"/>
        <dbReference type="ChEBI" id="CHEBI:15377"/>
        <dbReference type="ChEBI" id="CHEBI:59869"/>
        <dbReference type="ChEBI" id="CHEBI:60039"/>
        <dbReference type="ChEBI" id="CHEBI:195196"/>
        <dbReference type="EC" id="3.4.13.9"/>
    </reaction>
</comment>
<comment type="cofactor">
    <cofactor evidence="1">
        <name>Mn(2+)</name>
        <dbReference type="ChEBI" id="CHEBI:29035"/>
    </cofactor>
    <text evidence="1">Binds 2 manganese ions per subunit.</text>
</comment>
<comment type="similarity">
    <text evidence="1">Belongs to the peptidase M24B family. Bacterial-type prolidase subfamily.</text>
</comment>
<sequence length="439" mass="50059">MDQLTNHFHAHVAELNRRVAEIVARENLSGLVIHSGQPHRQFLDDMDYPFKVNPHFKAWLPILDNPHCWLLVNGRDKPQLIFYRPVDFWHKVADLPDEFWTAHVDIKLLTKADKVADLLPKDIVDWAYVGEHLDVAEVLGFKTRNPDAVMSYLHYHRATKTEYELACMRKSNEIAVKGHVAAKNAFYNGGSEFEIQQQYLMATNQGENEVPYGNIIALNRNASILHYTKLENQSPQPRRSFLIDAGANFFGYASDITRTYAFEKNIFSELIEAMDRAQLEIIDTMRPGVKYVDLHLATHQKVAQMLIDFDLATGDREGLIEQGITSVFFPHGLGHMLGLQVHDMGGFLHDERGTHIAAPDAHPFLRCTRTLAANQVLTIEPGLYIIDSLLQGLKQDNRQHQVNWNSVDLLRPFGGIRIEDNVIVHSDKNENMTRDLGLD</sequence>
<evidence type="ECO:0000255" key="1">
    <source>
        <dbReference type="HAMAP-Rule" id="MF_01279"/>
    </source>
</evidence>
<organism>
    <name type="scientific">Shewanella sediminis (strain HAW-EB3)</name>
    <dbReference type="NCBI Taxonomy" id="425104"/>
    <lineage>
        <taxon>Bacteria</taxon>
        <taxon>Pseudomonadati</taxon>
        <taxon>Pseudomonadota</taxon>
        <taxon>Gammaproteobacteria</taxon>
        <taxon>Alteromonadales</taxon>
        <taxon>Shewanellaceae</taxon>
        <taxon>Shewanella</taxon>
    </lineage>
</organism>
<name>PEPQ_SHESH</name>
<accession>A8FP64</accession>
<proteinExistence type="inferred from homology"/>
<reference key="1">
    <citation type="submission" date="2007-08" db="EMBL/GenBank/DDBJ databases">
        <title>Complete sequence of Shewanella sediminis HAW-EB3.</title>
        <authorList>
            <consortium name="US DOE Joint Genome Institute"/>
            <person name="Copeland A."/>
            <person name="Lucas S."/>
            <person name="Lapidus A."/>
            <person name="Barry K."/>
            <person name="Glavina del Rio T."/>
            <person name="Dalin E."/>
            <person name="Tice H."/>
            <person name="Pitluck S."/>
            <person name="Chertkov O."/>
            <person name="Brettin T."/>
            <person name="Bruce D."/>
            <person name="Detter J.C."/>
            <person name="Han C."/>
            <person name="Schmutz J."/>
            <person name="Larimer F."/>
            <person name="Land M."/>
            <person name="Hauser L."/>
            <person name="Kyrpides N."/>
            <person name="Kim E."/>
            <person name="Zhao J.-S."/>
            <person name="Richardson P."/>
        </authorList>
    </citation>
    <scope>NUCLEOTIDE SEQUENCE [LARGE SCALE GENOMIC DNA]</scope>
    <source>
        <strain>HAW-EB3</strain>
    </source>
</reference>
<keyword id="KW-0224">Dipeptidase</keyword>
<keyword id="KW-0378">Hydrolase</keyword>
<keyword id="KW-0464">Manganese</keyword>
<keyword id="KW-0479">Metal-binding</keyword>
<keyword id="KW-0482">Metalloprotease</keyword>
<keyword id="KW-0645">Protease</keyword>
<keyword id="KW-1185">Reference proteome</keyword>
<feature type="chain" id="PRO_1000085889" description="Xaa-Pro dipeptidase">
    <location>
        <begin position="1"/>
        <end position="439"/>
    </location>
</feature>
<feature type="binding site" evidence="1">
    <location>
        <position position="244"/>
    </location>
    <ligand>
        <name>Mn(2+)</name>
        <dbReference type="ChEBI" id="CHEBI:29035"/>
        <label>2</label>
    </ligand>
</feature>
<feature type="binding site" evidence="1">
    <location>
        <position position="255"/>
    </location>
    <ligand>
        <name>Mn(2+)</name>
        <dbReference type="ChEBI" id="CHEBI:29035"/>
        <label>1</label>
    </ligand>
</feature>
<feature type="binding site" evidence="1">
    <location>
        <position position="255"/>
    </location>
    <ligand>
        <name>Mn(2+)</name>
        <dbReference type="ChEBI" id="CHEBI:29035"/>
        <label>2</label>
    </ligand>
</feature>
<feature type="binding site" evidence="1">
    <location>
        <position position="335"/>
    </location>
    <ligand>
        <name>Mn(2+)</name>
        <dbReference type="ChEBI" id="CHEBI:29035"/>
        <label>1</label>
    </ligand>
</feature>
<feature type="binding site" evidence="1">
    <location>
        <position position="380"/>
    </location>
    <ligand>
        <name>Mn(2+)</name>
        <dbReference type="ChEBI" id="CHEBI:29035"/>
        <label>1</label>
    </ligand>
</feature>
<feature type="binding site" evidence="1">
    <location>
        <position position="419"/>
    </location>
    <ligand>
        <name>Mn(2+)</name>
        <dbReference type="ChEBI" id="CHEBI:29035"/>
        <label>1</label>
    </ligand>
</feature>
<feature type="binding site" evidence="1">
    <location>
        <position position="419"/>
    </location>
    <ligand>
        <name>Mn(2+)</name>
        <dbReference type="ChEBI" id="CHEBI:29035"/>
        <label>2</label>
    </ligand>
</feature>
<gene>
    <name evidence="1" type="primary">pepQ</name>
    <name type="ordered locus">Ssed_0024</name>
</gene>
<protein>
    <recommendedName>
        <fullName evidence="1">Xaa-Pro dipeptidase</fullName>
        <shortName evidence="1">X-Pro dipeptidase</shortName>
        <ecNumber evidence="1">3.4.13.9</ecNumber>
    </recommendedName>
    <alternativeName>
        <fullName evidence="1">Imidodipeptidase</fullName>
    </alternativeName>
    <alternativeName>
        <fullName evidence="1">Proline dipeptidase</fullName>
        <shortName evidence="1">Prolidase</shortName>
    </alternativeName>
</protein>